<organism>
    <name type="scientific">Caldivirga maquilingensis (strain ATCC 700844 / DSM 13496 / JCM 10307 / IC-167)</name>
    <dbReference type="NCBI Taxonomy" id="397948"/>
    <lineage>
        <taxon>Archaea</taxon>
        <taxon>Thermoproteota</taxon>
        <taxon>Thermoprotei</taxon>
        <taxon>Thermoproteales</taxon>
        <taxon>Thermoproteaceae</taxon>
        <taxon>Caldivirga</taxon>
    </lineage>
</organism>
<sequence>MSTTQGGSNQQDETRRELIIQKFKLFRREGNNLEFVDQSGQKLRCPICGNTVFIEDAERGQIVCASCGYVLMEHILDTGPEWRAFTPEEKEDRARTGGPLERVTSEELVTRIETTLKSPDLKKKLEILKYKKWQQRIRVQTSYERNLVQATHELNRIAHQLGVPKSCMDEALAVYKQVLKSGLVKGRSVEAIIAACLHMACRMQGMPRSLDEISQYTRAPRKEIARCFRLIARELRIRLPLSDPRQYVPKIVEQLKLPGDIAKEAIRVLEEAKDKGLTAGKDPAGLAAAAVYIASLLKGEVRTQKEIAQAAQVTEVTVRNRYKELAKELNIKIPIK</sequence>
<dbReference type="EMBL" id="CP000852">
    <property type="protein sequence ID" value="ABW01632.1"/>
    <property type="molecule type" value="Genomic_DNA"/>
</dbReference>
<dbReference type="RefSeq" id="WP_012185851.1">
    <property type="nucleotide sequence ID" value="NC_009954.1"/>
</dbReference>
<dbReference type="SMR" id="A8MCX6"/>
<dbReference type="STRING" id="397948.Cmaq_0797"/>
<dbReference type="GeneID" id="5710362"/>
<dbReference type="KEGG" id="cma:Cmaq_0797"/>
<dbReference type="eggNOG" id="arCOG01981">
    <property type="taxonomic scope" value="Archaea"/>
</dbReference>
<dbReference type="HOGENOM" id="CLU_043736_0_1_2"/>
<dbReference type="OrthoDB" id="7429at2157"/>
<dbReference type="Proteomes" id="UP000001137">
    <property type="component" value="Chromosome"/>
</dbReference>
<dbReference type="GO" id="GO:0097550">
    <property type="term" value="C:transcription preinitiation complex"/>
    <property type="evidence" value="ECO:0007669"/>
    <property type="project" value="TreeGrafter"/>
</dbReference>
<dbReference type="GO" id="GO:0003700">
    <property type="term" value="F:DNA-binding transcription factor activity"/>
    <property type="evidence" value="ECO:0007669"/>
    <property type="project" value="UniProtKB-UniRule"/>
</dbReference>
<dbReference type="GO" id="GO:0017025">
    <property type="term" value="F:TBP-class protein binding"/>
    <property type="evidence" value="ECO:0007669"/>
    <property type="project" value="InterPro"/>
</dbReference>
<dbReference type="GO" id="GO:0008270">
    <property type="term" value="F:zinc ion binding"/>
    <property type="evidence" value="ECO:0007669"/>
    <property type="project" value="UniProtKB-UniRule"/>
</dbReference>
<dbReference type="GO" id="GO:0070897">
    <property type="term" value="P:transcription preinitiation complex assembly"/>
    <property type="evidence" value="ECO:0007669"/>
    <property type="project" value="InterPro"/>
</dbReference>
<dbReference type="CDD" id="cd20549">
    <property type="entry name" value="CYCLIN_TFIIB_archaea_like_rpt1"/>
    <property type="match status" value="1"/>
</dbReference>
<dbReference type="CDD" id="cd20550">
    <property type="entry name" value="CYCLIN_TFIIB_archaea_like_rpt2"/>
    <property type="match status" value="1"/>
</dbReference>
<dbReference type="FunFam" id="1.10.472.10:FF:000023">
    <property type="entry name" value="Transcription initiation factor IIB"/>
    <property type="match status" value="1"/>
</dbReference>
<dbReference type="FunFam" id="1.10.472.170:FF:000001">
    <property type="entry name" value="Transcription initiation factor IIB"/>
    <property type="match status" value="1"/>
</dbReference>
<dbReference type="Gene3D" id="1.10.472.170">
    <property type="match status" value="1"/>
</dbReference>
<dbReference type="Gene3D" id="1.10.472.10">
    <property type="entry name" value="Cyclin-like"/>
    <property type="match status" value="1"/>
</dbReference>
<dbReference type="HAMAP" id="MF_00383">
    <property type="entry name" value="TF2B_arch"/>
    <property type="match status" value="1"/>
</dbReference>
<dbReference type="InterPro" id="IPR013763">
    <property type="entry name" value="Cyclin-like_dom"/>
</dbReference>
<dbReference type="InterPro" id="IPR036915">
    <property type="entry name" value="Cyclin-like_sf"/>
</dbReference>
<dbReference type="InterPro" id="IPR000812">
    <property type="entry name" value="TFIIB"/>
</dbReference>
<dbReference type="InterPro" id="IPR023484">
    <property type="entry name" value="TFIIB_arc"/>
</dbReference>
<dbReference type="InterPro" id="IPR023486">
    <property type="entry name" value="TFIIB_CS"/>
</dbReference>
<dbReference type="InterPro" id="IPR013150">
    <property type="entry name" value="TFIIB_cyclin"/>
</dbReference>
<dbReference type="InterPro" id="IPR013137">
    <property type="entry name" value="Znf_TFIIB"/>
</dbReference>
<dbReference type="NCBIfam" id="NF001658">
    <property type="entry name" value="PRK00423.1"/>
    <property type="match status" value="1"/>
</dbReference>
<dbReference type="PANTHER" id="PTHR11618:SF13">
    <property type="entry name" value="TRANSCRIPTION INITIATION FACTOR IIB"/>
    <property type="match status" value="1"/>
</dbReference>
<dbReference type="PANTHER" id="PTHR11618">
    <property type="entry name" value="TRANSCRIPTION INITIATION FACTOR IIB-RELATED"/>
    <property type="match status" value="1"/>
</dbReference>
<dbReference type="Pfam" id="PF00382">
    <property type="entry name" value="TFIIB"/>
    <property type="match status" value="2"/>
</dbReference>
<dbReference type="Pfam" id="PF08271">
    <property type="entry name" value="Zn_Ribbon_TF"/>
    <property type="match status" value="1"/>
</dbReference>
<dbReference type="PRINTS" id="PR00685">
    <property type="entry name" value="TIFACTORIIB"/>
</dbReference>
<dbReference type="SMART" id="SM00385">
    <property type="entry name" value="CYCLIN"/>
    <property type="match status" value="2"/>
</dbReference>
<dbReference type="SUPFAM" id="SSF47954">
    <property type="entry name" value="Cyclin-like"/>
    <property type="match status" value="2"/>
</dbReference>
<dbReference type="SUPFAM" id="SSF57783">
    <property type="entry name" value="Zinc beta-ribbon"/>
    <property type="match status" value="1"/>
</dbReference>
<dbReference type="PROSITE" id="PS00782">
    <property type="entry name" value="TFIIB"/>
    <property type="match status" value="1"/>
</dbReference>
<dbReference type="PROSITE" id="PS51134">
    <property type="entry name" value="ZF_TFIIB"/>
    <property type="match status" value="1"/>
</dbReference>
<name>TF2B_CALMQ</name>
<proteinExistence type="inferred from homology"/>
<reference key="1">
    <citation type="submission" date="2007-10" db="EMBL/GenBank/DDBJ databases">
        <title>Complete sequence of Caldivirga maquilingensis IC-167.</title>
        <authorList>
            <consortium name="US DOE Joint Genome Institute"/>
            <person name="Copeland A."/>
            <person name="Lucas S."/>
            <person name="Lapidus A."/>
            <person name="Barry K."/>
            <person name="Glavina del Rio T."/>
            <person name="Dalin E."/>
            <person name="Tice H."/>
            <person name="Pitluck S."/>
            <person name="Saunders E."/>
            <person name="Brettin T."/>
            <person name="Bruce D."/>
            <person name="Detter J.C."/>
            <person name="Han C."/>
            <person name="Schmutz J."/>
            <person name="Larimer F."/>
            <person name="Land M."/>
            <person name="Hauser L."/>
            <person name="Kyrpides N."/>
            <person name="Ivanova N."/>
            <person name="Biddle J.F."/>
            <person name="Zhang Z."/>
            <person name="Fitz-Gibbon S.T."/>
            <person name="Lowe T.M."/>
            <person name="Saltikov C."/>
            <person name="House C.H."/>
            <person name="Richardson P."/>
        </authorList>
    </citation>
    <scope>NUCLEOTIDE SEQUENCE [LARGE SCALE GENOMIC DNA]</scope>
    <source>
        <strain>ATCC 700844 / DSM 13496 / JCM 10307 / IC-167</strain>
    </source>
</reference>
<comment type="function">
    <text evidence="1">Stabilizes TBP binding to an archaeal box-A promoter. Also responsible for recruiting RNA polymerase II to the pre-initiation complex (DNA-TBP-TFIIB).</text>
</comment>
<comment type="similarity">
    <text evidence="1">Belongs to the TFIIB family.</text>
</comment>
<accession>A8MCX6</accession>
<keyword id="KW-0479">Metal-binding</keyword>
<keyword id="KW-1185">Reference proteome</keyword>
<keyword id="KW-0677">Repeat</keyword>
<keyword id="KW-0804">Transcription</keyword>
<keyword id="KW-0805">Transcription regulation</keyword>
<keyword id="KW-0862">Zinc</keyword>
<keyword id="KW-0863">Zinc-finger</keyword>
<evidence type="ECO:0000255" key="1">
    <source>
        <dbReference type="HAMAP-Rule" id="MF_00383"/>
    </source>
</evidence>
<evidence type="ECO:0000255" key="2">
    <source>
        <dbReference type="PROSITE-ProRule" id="PRU00469"/>
    </source>
</evidence>
<protein>
    <recommendedName>
        <fullName evidence="1">Transcription initiation factor IIB</fullName>
        <shortName evidence="1">TFIIB</shortName>
    </recommendedName>
</protein>
<gene>
    <name evidence="1" type="primary">tfb</name>
    <name type="ordered locus">Cmaq_0797</name>
</gene>
<feature type="chain" id="PRO_1000080104" description="Transcription initiation factor IIB">
    <location>
        <begin position="1"/>
        <end position="336"/>
    </location>
</feature>
<feature type="repeat" description="1">
    <location>
        <begin position="152"/>
        <end position="235"/>
    </location>
</feature>
<feature type="repeat" description="2">
    <location>
        <begin position="246"/>
        <end position="327"/>
    </location>
</feature>
<feature type="zinc finger region" description="TFIIB-type" evidence="2">
    <location>
        <begin position="41"/>
        <end position="72"/>
    </location>
</feature>
<feature type="binding site" evidence="2">
    <location>
        <position position="45"/>
    </location>
    <ligand>
        <name>Zn(2+)</name>
        <dbReference type="ChEBI" id="CHEBI:29105"/>
    </ligand>
</feature>
<feature type="binding site" evidence="2">
    <location>
        <position position="48"/>
    </location>
    <ligand>
        <name>Zn(2+)</name>
        <dbReference type="ChEBI" id="CHEBI:29105"/>
    </ligand>
</feature>
<feature type="binding site" evidence="2">
    <location>
        <position position="64"/>
    </location>
    <ligand>
        <name>Zn(2+)</name>
        <dbReference type="ChEBI" id="CHEBI:29105"/>
    </ligand>
</feature>
<feature type="binding site" evidence="2">
    <location>
        <position position="67"/>
    </location>
    <ligand>
        <name>Zn(2+)</name>
        <dbReference type="ChEBI" id="CHEBI:29105"/>
    </ligand>
</feature>